<accession>Q05881</accession>
<accession>D6VYT2</accession>
<evidence type="ECO:0000269" key="1">
    <source>
    </source>
</evidence>
<evidence type="ECO:0000269" key="2">
    <source>
    </source>
</evidence>
<comment type="subcellular location">
    <subcellularLocation>
        <location evidence="1">Cytoplasm</location>
    </subcellularLocation>
</comment>
<comment type="miscellaneous">
    <text evidence="2">Present with 9100 molecules/cell in log phase SD medium.</text>
</comment>
<sequence>MSTGSSDRKDDVKLLELLNSIDEQFLVPYKKPEDLRKISSTTKLQGSTPTKELDKLASVLKAHCTKIGIVCKPGTFDNNHKVVITEIQNFSRPLFYLLSLFPLFYNNKDCPKYFTDQLDESTLQLLDGLRDFIAELQERLKNDENASLDKERLTSVGKIFNACDSLSNCSKAGPYGILANILKDNVAIMDDTMNEIKEWLEEPDFSANSDDIFLDFEDSESESDSQKEEFDQEKVYENIKLFFDGFTRKIKLIKLLVSTFRKTLVSKDFTPKRNQAETLDSIHTYLKEIQLLLDEVVSTVQFEPKNFTNEEVKEEQAALVAVTKKVLIQMSKLYEGDPKRKKWIDTWEIKFNELF</sequence>
<reference key="1">
    <citation type="journal article" date="1997" name="Nature">
        <title>The nucleotide sequence of Saccharomyces cerevisiae chromosome XII.</title>
        <authorList>
            <person name="Johnston M."/>
            <person name="Hillier L.W."/>
            <person name="Riles L."/>
            <person name="Albermann K."/>
            <person name="Andre B."/>
            <person name="Ansorge W."/>
            <person name="Benes V."/>
            <person name="Brueckner M."/>
            <person name="Delius H."/>
            <person name="Dubois E."/>
            <person name="Duesterhoeft A."/>
            <person name="Entian K.-D."/>
            <person name="Floeth M."/>
            <person name="Goffeau A."/>
            <person name="Hebling U."/>
            <person name="Heumann K."/>
            <person name="Heuss-Neitzel D."/>
            <person name="Hilbert H."/>
            <person name="Hilger F."/>
            <person name="Kleine K."/>
            <person name="Koetter P."/>
            <person name="Louis E.J."/>
            <person name="Messenguy F."/>
            <person name="Mewes H.-W."/>
            <person name="Miosga T."/>
            <person name="Moestl D."/>
            <person name="Mueller-Auer S."/>
            <person name="Nentwich U."/>
            <person name="Obermaier B."/>
            <person name="Piravandi E."/>
            <person name="Pohl T.M."/>
            <person name="Portetelle D."/>
            <person name="Purnelle B."/>
            <person name="Rechmann S."/>
            <person name="Rieger M."/>
            <person name="Rinke M."/>
            <person name="Rose M."/>
            <person name="Scharfe M."/>
            <person name="Scherens B."/>
            <person name="Scholler P."/>
            <person name="Schwager C."/>
            <person name="Schwarz S."/>
            <person name="Underwood A.P."/>
            <person name="Urrestarazu L.A."/>
            <person name="Vandenbol M."/>
            <person name="Verhasselt P."/>
            <person name="Vierendeels F."/>
            <person name="Voet M."/>
            <person name="Volckaert G."/>
            <person name="Voss H."/>
            <person name="Wambutt R."/>
            <person name="Wedler E."/>
            <person name="Wedler H."/>
            <person name="Zimmermann F.K."/>
            <person name="Zollner A."/>
            <person name="Hani J."/>
            <person name="Hoheisel J.D."/>
        </authorList>
    </citation>
    <scope>NUCLEOTIDE SEQUENCE [LARGE SCALE GENOMIC DNA]</scope>
    <source>
        <strain>ATCC 204508 / S288c</strain>
    </source>
</reference>
<reference key="2">
    <citation type="journal article" date="2014" name="G3 (Bethesda)">
        <title>The reference genome sequence of Saccharomyces cerevisiae: Then and now.</title>
        <authorList>
            <person name="Engel S.R."/>
            <person name="Dietrich F.S."/>
            <person name="Fisk D.G."/>
            <person name="Binkley G."/>
            <person name="Balakrishnan R."/>
            <person name="Costanzo M.C."/>
            <person name="Dwight S.S."/>
            <person name="Hitz B.C."/>
            <person name="Karra K."/>
            <person name="Nash R.S."/>
            <person name="Weng S."/>
            <person name="Wong E.D."/>
            <person name="Lloyd P."/>
            <person name="Skrzypek M.S."/>
            <person name="Miyasato S.R."/>
            <person name="Simison M."/>
            <person name="Cherry J.M."/>
        </authorList>
    </citation>
    <scope>GENOME REANNOTATION</scope>
    <source>
        <strain>ATCC 204508 / S288c</strain>
    </source>
</reference>
<reference key="3">
    <citation type="journal article" date="2007" name="Genome Res.">
        <title>Approaching a complete repository of sequence-verified protein-encoding clones for Saccharomyces cerevisiae.</title>
        <authorList>
            <person name="Hu Y."/>
            <person name="Rolfs A."/>
            <person name="Bhullar B."/>
            <person name="Murthy T.V.S."/>
            <person name="Zhu C."/>
            <person name="Berger M.F."/>
            <person name="Camargo A.A."/>
            <person name="Kelley F."/>
            <person name="McCarron S."/>
            <person name="Jepson D."/>
            <person name="Richardson A."/>
            <person name="Raphael J."/>
            <person name="Moreira D."/>
            <person name="Taycher E."/>
            <person name="Zuo D."/>
            <person name="Mohr S."/>
            <person name="Kane M.F."/>
            <person name="Williamson J."/>
            <person name="Simpson A.J.G."/>
            <person name="Bulyk M.L."/>
            <person name="Harlow E."/>
            <person name="Marsischky G."/>
            <person name="Kolodner R.D."/>
            <person name="LaBaer J."/>
        </authorList>
    </citation>
    <scope>NUCLEOTIDE SEQUENCE [GENOMIC DNA]</scope>
    <source>
        <strain>ATCC 204508 / S288c</strain>
    </source>
</reference>
<reference key="4">
    <citation type="journal article" date="2003" name="Nature">
        <title>Global analysis of protein localization in budding yeast.</title>
        <authorList>
            <person name="Huh W.-K."/>
            <person name="Falvo J.V."/>
            <person name="Gerke L.C."/>
            <person name="Carroll A.S."/>
            <person name="Howson R.W."/>
            <person name="Weissman J.S."/>
            <person name="O'Shea E.K."/>
        </authorList>
    </citation>
    <scope>SUBCELLULAR LOCATION [LARGE SCALE ANALYSIS]</scope>
</reference>
<reference key="5">
    <citation type="journal article" date="2003" name="Nature">
        <title>Global analysis of protein expression in yeast.</title>
        <authorList>
            <person name="Ghaemmaghami S."/>
            <person name="Huh W.-K."/>
            <person name="Bower K."/>
            <person name="Howson R.W."/>
            <person name="Belle A."/>
            <person name="Dephoure N."/>
            <person name="O'Shea E.K."/>
            <person name="Weissman J.S."/>
        </authorList>
    </citation>
    <scope>LEVEL OF PROTEIN EXPRESSION [LARGE SCALE ANALYSIS]</scope>
</reference>
<organism>
    <name type="scientific">Saccharomyces cerevisiae (strain ATCC 204508 / S288c)</name>
    <name type="common">Baker's yeast</name>
    <dbReference type="NCBI Taxonomy" id="559292"/>
    <lineage>
        <taxon>Eukaryota</taxon>
        <taxon>Fungi</taxon>
        <taxon>Dikarya</taxon>
        <taxon>Ascomycota</taxon>
        <taxon>Saccharomycotina</taxon>
        <taxon>Saccharomycetes</taxon>
        <taxon>Saccharomycetales</taxon>
        <taxon>Saccharomycetaceae</taxon>
        <taxon>Saccharomyces</taxon>
    </lineage>
</organism>
<keyword id="KW-0963">Cytoplasm</keyword>
<keyword id="KW-1185">Reference proteome</keyword>
<feature type="chain" id="PRO_0000247209" description="Uncharacterized protein YLR287C">
    <location>
        <begin position="1"/>
        <end position="355"/>
    </location>
</feature>
<dbReference type="EMBL" id="U17243">
    <property type="protein sequence ID" value="AAB67332.1"/>
    <property type="molecule type" value="Genomic_DNA"/>
</dbReference>
<dbReference type="EMBL" id="AY692596">
    <property type="protein sequence ID" value="AAT92615.1"/>
    <property type="molecule type" value="Genomic_DNA"/>
</dbReference>
<dbReference type="EMBL" id="BK006945">
    <property type="protein sequence ID" value="DAA09598.1"/>
    <property type="molecule type" value="Genomic_DNA"/>
</dbReference>
<dbReference type="PIR" id="S50372">
    <property type="entry name" value="S50372"/>
</dbReference>
<dbReference type="RefSeq" id="NP_013389.1">
    <property type="nucleotide sequence ID" value="NM_001182174.1"/>
</dbReference>
<dbReference type="SMR" id="Q05881"/>
<dbReference type="BioGRID" id="31552">
    <property type="interactions" value="206"/>
</dbReference>
<dbReference type="DIP" id="DIP-4354N"/>
<dbReference type="FunCoup" id="Q05881">
    <property type="interactions" value="105"/>
</dbReference>
<dbReference type="IntAct" id="Q05881">
    <property type="interactions" value="29"/>
</dbReference>
<dbReference type="MINT" id="Q05881"/>
<dbReference type="STRING" id="4932.YLR287C"/>
<dbReference type="iPTMnet" id="Q05881"/>
<dbReference type="PaxDb" id="4932-YLR287C"/>
<dbReference type="PeptideAtlas" id="Q05881"/>
<dbReference type="EnsemblFungi" id="YLR287C_mRNA">
    <property type="protein sequence ID" value="YLR287C"/>
    <property type="gene ID" value="YLR287C"/>
</dbReference>
<dbReference type="GeneID" id="850993"/>
<dbReference type="KEGG" id="sce:YLR287C"/>
<dbReference type="AGR" id="SGD:S000004277"/>
<dbReference type="SGD" id="S000004277">
    <property type="gene designation" value="YLR287C"/>
</dbReference>
<dbReference type="VEuPathDB" id="FungiDB:YLR287C"/>
<dbReference type="eggNOG" id="ENOG502QZAU">
    <property type="taxonomic scope" value="Eukaryota"/>
</dbReference>
<dbReference type="HOGENOM" id="CLU_067849_0_0_1"/>
<dbReference type="InParanoid" id="Q05881"/>
<dbReference type="OMA" id="WIDTWEI"/>
<dbReference type="OrthoDB" id="4088536at2759"/>
<dbReference type="BioCyc" id="YEAST:G3O-32381-MONOMER"/>
<dbReference type="BioGRID-ORCS" id="850993">
    <property type="hits" value="0 hits in 10 CRISPR screens"/>
</dbReference>
<dbReference type="PRO" id="PR:Q05881"/>
<dbReference type="Proteomes" id="UP000002311">
    <property type="component" value="Chromosome XII"/>
</dbReference>
<dbReference type="RNAct" id="Q05881">
    <property type="molecule type" value="protein"/>
</dbReference>
<dbReference type="GO" id="GO:0005737">
    <property type="term" value="C:cytoplasm"/>
    <property type="evidence" value="ECO:0007005"/>
    <property type="project" value="SGD"/>
</dbReference>
<dbReference type="GO" id="GO:0005634">
    <property type="term" value="C:nucleus"/>
    <property type="evidence" value="ECO:0000318"/>
    <property type="project" value="GO_Central"/>
</dbReference>
<dbReference type="FunFam" id="1.20.1420.10:FF:000019">
    <property type="entry name" value="YLR287C-like protein"/>
    <property type="match status" value="1"/>
</dbReference>
<dbReference type="Gene3D" id="1.20.1410.10">
    <property type="entry name" value="I/LWEQ domain"/>
    <property type="match status" value="1"/>
</dbReference>
<dbReference type="Gene3D" id="1.20.1420.10">
    <property type="entry name" value="Talin, central domain"/>
    <property type="match status" value="1"/>
</dbReference>
<dbReference type="InterPro" id="IPR026907">
    <property type="entry name" value="GCIP-like"/>
</dbReference>
<dbReference type="InterPro" id="IPR049317">
    <property type="entry name" value="GCIP-like_N"/>
</dbReference>
<dbReference type="PANTHER" id="PTHR15492">
    <property type="entry name" value="CYCLIN D1-BINDING PROTEIN 1"/>
    <property type="match status" value="1"/>
</dbReference>
<dbReference type="PANTHER" id="PTHR15492:SF1">
    <property type="entry name" value="CYCLIN-D1-BINDING PROTEIN 1"/>
    <property type="match status" value="1"/>
</dbReference>
<dbReference type="Pfam" id="PF13324">
    <property type="entry name" value="GCIP_N"/>
    <property type="match status" value="1"/>
</dbReference>
<gene>
    <name type="ordered locus">YLR287C</name>
</gene>
<name>YL287_YEAST</name>
<protein>
    <recommendedName>
        <fullName>Uncharacterized protein YLR287C</fullName>
    </recommendedName>
</protein>
<proteinExistence type="evidence at protein level"/>